<gene>
    <name type="primary">MEP4</name>
</gene>
<evidence type="ECO:0000250" key="1"/>
<evidence type="ECO:0000255" key="2"/>
<evidence type="ECO:0000255" key="3">
    <source>
        <dbReference type="PROSITE-ProRule" id="PRU10095"/>
    </source>
</evidence>
<evidence type="ECO:0000269" key="4">
    <source>
    </source>
</evidence>
<evidence type="ECO:0000305" key="5"/>
<comment type="function">
    <text evidence="1">Secreted metalloproteinase probably acting as a virulence factor.</text>
</comment>
<comment type="cofactor">
    <cofactor evidence="1">
        <name>Zn(2+)</name>
        <dbReference type="ChEBI" id="CHEBI:29105"/>
    </cofactor>
    <text evidence="1">Binds 1 zinc ion per subunit.</text>
</comment>
<comment type="subcellular location">
    <subcellularLocation>
        <location evidence="4">Secreted</location>
    </subcellularLocation>
</comment>
<comment type="similarity">
    <text evidence="5">Belongs to the peptidase M36 family.</text>
</comment>
<dbReference type="EC" id="3.4.24.-"/>
<dbReference type="EMBL" id="AY283573">
    <property type="protein sequence ID" value="AAQ21098.1"/>
    <property type="molecule type" value="Genomic_DNA"/>
</dbReference>
<dbReference type="SMR" id="Q6WIH4"/>
<dbReference type="MEROPS" id="M36.001"/>
<dbReference type="GlyCosmos" id="Q6WIH4">
    <property type="glycosylation" value="2 sites, No reported glycans"/>
</dbReference>
<dbReference type="GO" id="GO:0005576">
    <property type="term" value="C:extracellular region"/>
    <property type="evidence" value="ECO:0007669"/>
    <property type="project" value="UniProtKB-SubCell"/>
</dbReference>
<dbReference type="GO" id="GO:0004222">
    <property type="term" value="F:metalloendopeptidase activity"/>
    <property type="evidence" value="ECO:0007669"/>
    <property type="project" value="InterPro"/>
</dbReference>
<dbReference type="GO" id="GO:0008270">
    <property type="term" value="F:zinc ion binding"/>
    <property type="evidence" value="ECO:0007669"/>
    <property type="project" value="InterPro"/>
</dbReference>
<dbReference type="GO" id="GO:0006508">
    <property type="term" value="P:proteolysis"/>
    <property type="evidence" value="ECO:0007669"/>
    <property type="project" value="UniProtKB-KW"/>
</dbReference>
<dbReference type="CDD" id="cd09596">
    <property type="entry name" value="M36"/>
    <property type="match status" value="1"/>
</dbReference>
<dbReference type="Gene3D" id="3.10.170.10">
    <property type="match status" value="1"/>
</dbReference>
<dbReference type="Gene3D" id="1.10.390.10">
    <property type="entry name" value="Neutral Protease Domain 2"/>
    <property type="match status" value="1"/>
</dbReference>
<dbReference type="InterPro" id="IPR011096">
    <property type="entry name" value="FTP_domain"/>
</dbReference>
<dbReference type="InterPro" id="IPR050371">
    <property type="entry name" value="Fungal_virulence_M36"/>
</dbReference>
<dbReference type="InterPro" id="IPR001842">
    <property type="entry name" value="Peptidase_M36"/>
</dbReference>
<dbReference type="InterPro" id="IPR027268">
    <property type="entry name" value="Peptidase_M4/M1_CTD_sf"/>
</dbReference>
<dbReference type="PANTHER" id="PTHR33478">
    <property type="entry name" value="EXTRACELLULAR METALLOPROTEINASE MEP"/>
    <property type="match status" value="1"/>
</dbReference>
<dbReference type="PANTHER" id="PTHR33478:SF1">
    <property type="entry name" value="EXTRACELLULAR METALLOPROTEINASE MEP"/>
    <property type="match status" value="1"/>
</dbReference>
<dbReference type="Pfam" id="PF07504">
    <property type="entry name" value="FTP"/>
    <property type="match status" value="1"/>
</dbReference>
<dbReference type="Pfam" id="PF02128">
    <property type="entry name" value="Peptidase_M36"/>
    <property type="match status" value="1"/>
</dbReference>
<dbReference type="PRINTS" id="PR00999">
    <property type="entry name" value="FUNGALYSIN"/>
</dbReference>
<dbReference type="SUPFAM" id="SSF55486">
    <property type="entry name" value="Metalloproteases ('zincins'), catalytic domain"/>
    <property type="match status" value="1"/>
</dbReference>
<dbReference type="PROSITE" id="PS00142">
    <property type="entry name" value="ZINC_PROTEASE"/>
    <property type="match status" value="1"/>
</dbReference>
<sequence length="649" mass="71250">MHGLLLAGLLALPSNVLGHPAEPPNSVNVTHRHIDTSAYFLPQLSLYNKSEDVAEYGGDNITGSSYSGGDHSASNLSSEDYVTVATSLLKATLPYASFRLIDDHYIGDSGIGHVHFRQTVYGIDIDNTDFNVNVGRDGKVFSYGSSFYEGEIPKANPVAKRDFSDPVNALIGAINTLNIPVTAAVGEVKTTPIEGNSTYMFKGTTGALTDPTAQLVYLQKDGGLHLTWRVETDVGDNWLLTYVDAKKNDQVHGVVDYVASAEYQVYPWGVNDPTDGERAHLYFPWFKTGSRNWHIDGRGWHTTTRGNNAIAQDNPSGGWEYEDNHRPTNPLLIFRYPYTQSMTPPASYRDASITQLFYTGNVYHDLLYILGFNEKAGNFQVNNWGKGGKGNDFTILNTQDGSGVNNANFATPPDGQPGRMRMYVWDTSTPYRDGSFEAGIVIHEYTHGVSNRLTGGPANSRCLSSLESGGMGEGWSDFFATVVHLKERDTRNKNYTIGEWASGRQGGIRKYPYSTDLHTNPLMYVDADGLESVHAIGTIWCTILNEVLWNLIERHGMGNVNKIKPTFKDGVPTDGRNLAMKLVLDGMALQPCLPNFVQARDAIIDADMNLTKGANRCELWKAFAKRGLGVGAAYNPEKRVGSSRVPGGC</sequence>
<name>MEP4_ARTOT</name>
<organism>
    <name type="scientific">Arthroderma otae</name>
    <name type="common">Microsporum canis</name>
    <dbReference type="NCBI Taxonomy" id="63405"/>
    <lineage>
        <taxon>Eukaryota</taxon>
        <taxon>Fungi</taxon>
        <taxon>Dikarya</taxon>
        <taxon>Ascomycota</taxon>
        <taxon>Pezizomycotina</taxon>
        <taxon>Eurotiomycetes</taxon>
        <taxon>Eurotiomycetidae</taxon>
        <taxon>Onygenales</taxon>
        <taxon>Arthrodermataceae</taxon>
        <taxon>Microsporum</taxon>
    </lineage>
</organism>
<proteinExistence type="evidence at protein level"/>
<keyword id="KW-0325">Glycoprotein</keyword>
<keyword id="KW-0378">Hydrolase</keyword>
<keyword id="KW-0479">Metal-binding</keyword>
<keyword id="KW-0482">Metalloprotease</keyword>
<keyword id="KW-0645">Protease</keyword>
<keyword id="KW-0964">Secreted</keyword>
<keyword id="KW-0732">Signal</keyword>
<keyword id="KW-0843">Virulence</keyword>
<keyword id="KW-0862">Zinc</keyword>
<keyword id="KW-0865">Zymogen</keyword>
<accession>Q6WIH4</accession>
<feature type="signal peptide" evidence="2">
    <location>
        <begin position="1"/>
        <end position="18"/>
    </location>
</feature>
<feature type="propeptide" id="PRO_0000380862" evidence="1">
    <location>
        <begin position="19"/>
        <end position="260"/>
    </location>
</feature>
<feature type="chain" id="PRO_0000380863" description="Extracellular metalloproteinase 4">
    <location>
        <begin position="261"/>
        <end position="649"/>
    </location>
</feature>
<feature type="active site" evidence="3">
    <location>
        <position position="444"/>
    </location>
</feature>
<feature type="binding site" evidence="3">
    <location>
        <position position="443"/>
    </location>
    <ligand>
        <name>Zn(2+)</name>
        <dbReference type="ChEBI" id="CHEBI:29105"/>
        <note>catalytic</note>
    </ligand>
</feature>
<feature type="binding site" evidence="3">
    <location>
        <position position="447"/>
    </location>
    <ligand>
        <name>Zn(2+)</name>
        <dbReference type="ChEBI" id="CHEBI:29105"/>
        <note>catalytic</note>
    </ligand>
</feature>
<feature type="glycosylation site" description="N-linked (GlcNAc...) asparagine" evidence="2">
    <location>
        <position position="494"/>
    </location>
</feature>
<feature type="glycosylation site" description="N-linked (GlcNAc...) asparagine" evidence="2">
    <location>
        <position position="609"/>
    </location>
</feature>
<protein>
    <recommendedName>
        <fullName>Extracellular metalloproteinase 4</fullName>
        <ecNumber>3.4.24.-</ecNumber>
    </recommendedName>
    <alternativeName>
        <fullName>Fungalysin MEP4</fullName>
    </alternativeName>
</protein>
<reference key="1">
    <citation type="journal article" date="2004" name="Microbiology">
        <title>Multiplication of an ancestral gene encoding secreted fungalysin preceded species differentiation in the dermatophytes Trichophyton and Microsporum.</title>
        <authorList>
            <person name="Jousson O."/>
            <person name="Lechenne B."/>
            <person name="Bontems O."/>
            <person name="Capoccia S."/>
            <person name="Mignon B."/>
            <person name="Barblan J."/>
            <person name="Quadroni M."/>
            <person name="Monod M."/>
        </authorList>
    </citation>
    <scope>NUCLEOTIDE SEQUENCE [GENOMIC DNA]</scope>
    <scope>IDENTIFICATION BY MASS SPECTROMETRY</scope>
    <scope>SUBCELLULAR LOCATION</scope>
    <source>
        <strain>LAU709-03</strain>
    </source>
</reference>